<proteinExistence type="predicted"/>
<dbReference type="EMBL" id="Z67753">
    <property type="protein sequence ID" value="CAA91719.1"/>
    <property type="molecule type" value="Genomic_DNA"/>
</dbReference>
<dbReference type="PIR" id="S78346">
    <property type="entry name" value="S78346"/>
</dbReference>
<dbReference type="RefSeq" id="NP_043687.1">
    <property type="nucleotide sequence ID" value="NC_001713.1"/>
</dbReference>
<dbReference type="SMR" id="P49835"/>
<dbReference type="GeneID" id="1457271"/>
<dbReference type="GO" id="GO:0009507">
    <property type="term" value="C:chloroplast"/>
    <property type="evidence" value="ECO:0007669"/>
    <property type="project" value="UniProtKB-SubCell"/>
</dbReference>
<keyword id="KW-0150">Chloroplast</keyword>
<keyword id="KW-0934">Plastid</keyword>
<name>YCX9_TRICV</name>
<protein>
    <recommendedName>
        <fullName>Uncharacterized 5.4 kDa protein in trnK-psbC intergenic region</fullName>
    </recommendedName>
    <alternativeName>
        <fullName>ORF44</fullName>
    </alternativeName>
</protein>
<sequence length="44" mass="5411">MKSLKIRFRRFLLEKLSFYFKLIKTFLEFISLLINSFAMGDLKY</sequence>
<reference key="1">
    <citation type="journal article" date="1995" name="Plant Mol. Biol. Rep.">
        <title>The chloroplast genome of a chlorophyll a+c-containing alga, Odontella sinensis.</title>
        <authorList>
            <person name="Kowallik K.V."/>
            <person name="Stoebe B."/>
            <person name="Schaffran I."/>
            <person name="Kroth-Pancic P."/>
            <person name="Freier U."/>
        </authorList>
    </citation>
    <scope>NUCLEOTIDE SEQUENCE [LARGE SCALE GENOMIC DNA]</scope>
</reference>
<geneLocation type="chloroplast"/>
<accession>P49835</accession>
<comment type="subcellular location">
    <subcellularLocation>
        <location>Plastid</location>
        <location>Chloroplast</location>
    </subcellularLocation>
</comment>
<organism>
    <name type="scientific">Trieres chinensis</name>
    <name type="common">Marine centric diatom</name>
    <name type="synonym">Odontella sinensis</name>
    <dbReference type="NCBI Taxonomy" id="1514140"/>
    <lineage>
        <taxon>Eukaryota</taxon>
        <taxon>Sar</taxon>
        <taxon>Stramenopiles</taxon>
        <taxon>Ochrophyta</taxon>
        <taxon>Bacillariophyta</taxon>
        <taxon>Mediophyceae</taxon>
        <taxon>Biddulphiophycidae</taxon>
        <taxon>Eupodiscales</taxon>
        <taxon>Parodontellaceae</taxon>
        <taxon>Trieres</taxon>
    </lineage>
</organism>
<feature type="chain" id="PRO_0000217461" description="Uncharacterized 5.4 kDa protein in trnK-psbC intergenic region">
    <location>
        <begin position="1"/>
        <end position="44"/>
    </location>
</feature>